<feature type="chain" id="PRO_0000381505" description="Biotin synthase">
    <location>
        <begin position="1"/>
        <end position="345"/>
    </location>
</feature>
<feature type="domain" description="Radical SAM core" evidence="2">
    <location>
        <begin position="49"/>
        <end position="276"/>
    </location>
</feature>
<feature type="binding site" evidence="1">
    <location>
        <position position="64"/>
    </location>
    <ligand>
        <name>[4Fe-4S] cluster</name>
        <dbReference type="ChEBI" id="CHEBI:49883"/>
        <note>4Fe-4S-S-AdoMet</note>
    </ligand>
</feature>
<feature type="binding site" evidence="1">
    <location>
        <position position="68"/>
    </location>
    <ligand>
        <name>[4Fe-4S] cluster</name>
        <dbReference type="ChEBI" id="CHEBI:49883"/>
        <note>4Fe-4S-S-AdoMet</note>
    </ligand>
</feature>
<feature type="binding site" evidence="1">
    <location>
        <position position="71"/>
    </location>
    <ligand>
        <name>[4Fe-4S] cluster</name>
        <dbReference type="ChEBI" id="CHEBI:49883"/>
        <note>4Fe-4S-S-AdoMet</note>
    </ligand>
</feature>
<feature type="binding site" evidence="1">
    <location>
        <position position="108"/>
    </location>
    <ligand>
        <name>[2Fe-2S] cluster</name>
        <dbReference type="ChEBI" id="CHEBI:190135"/>
    </ligand>
</feature>
<feature type="binding site" evidence="1">
    <location>
        <position position="139"/>
    </location>
    <ligand>
        <name>[2Fe-2S] cluster</name>
        <dbReference type="ChEBI" id="CHEBI:190135"/>
    </ligand>
</feature>
<feature type="binding site" evidence="1">
    <location>
        <position position="199"/>
    </location>
    <ligand>
        <name>[2Fe-2S] cluster</name>
        <dbReference type="ChEBI" id="CHEBI:190135"/>
    </ligand>
</feature>
<feature type="binding site" evidence="1">
    <location>
        <position position="271"/>
    </location>
    <ligand>
        <name>[2Fe-2S] cluster</name>
        <dbReference type="ChEBI" id="CHEBI:190135"/>
    </ligand>
</feature>
<name>BIOB_NITOC</name>
<organism>
    <name type="scientific">Nitrosococcus oceani (strain ATCC 19707 / BCRC 17464 / JCM 30415 / NCIMB 11848 / C-107)</name>
    <dbReference type="NCBI Taxonomy" id="323261"/>
    <lineage>
        <taxon>Bacteria</taxon>
        <taxon>Pseudomonadati</taxon>
        <taxon>Pseudomonadota</taxon>
        <taxon>Gammaproteobacteria</taxon>
        <taxon>Chromatiales</taxon>
        <taxon>Chromatiaceae</taxon>
        <taxon>Nitrosococcus</taxon>
    </lineage>
</organism>
<gene>
    <name evidence="1" type="primary">bioB</name>
    <name type="ordered locus">Noc_2101</name>
</gene>
<protein>
    <recommendedName>
        <fullName evidence="1">Biotin synthase</fullName>
        <ecNumber evidence="1">2.8.1.6</ecNumber>
    </recommendedName>
</protein>
<reference key="1">
    <citation type="journal article" date="2006" name="Appl. Environ. Microbiol.">
        <title>Complete genome sequence of the marine, chemolithoautotrophic, ammonia-oxidizing bacterium Nitrosococcus oceani ATCC 19707.</title>
        <authorList>
            <person name="Klotz M.G."/>
            <person name="Arp D.J."/>
            <person name="Chain P.S.G."/>
            <person name="El-Sheikh A.F."/>
            <person name="Hauser L.J."/>
            <person name="Hommes N.G."/>
            <person name="Larimer F.W."/>
            <person name="Malfatti S.A."/>
            <person name="Norton J.M."/>
            <person name="Poret-Peterson A.T."/>
            <person name="Vergez L.M."/>
            <person name="Ward B.B."/>
        </authorList>
    </citation>
    <scope>NUCLEOTIDE SEQUENCE [LARGE SCALE GENOMIC DNA]</scope>
    <source>
        <strain>ATCC 19707 / BCRC 17464 / JCM 30415 / NCIMB 11848 / C-107</strain>
    </source>
</reference>
<dbReference type="EC" id="2.8.1.6" evidence="1"/>
<dbReference type="EMBL" id="CP000127">
    <property type="protein sequence ID" value="ABA58561.1"/>
    <property type="molecule type" value="Genomic_DNA"/>
</dbReference>
<dbReference type="RefSeq" id="WP_002811578.1">
    <property type="nucleotide sequence ID" value="NC_007484.1"/>
</dbReference>
<dbReference type="SMR" id="Q3J9D5"/>
<dbReference type="FunCoup" id="Q3J9D5">
    <property type="interactions" value="377"/>
</dbReference>
<dbReference type="STRING" id="323261.Noc_2101"/>
<dbReference type="KEGG" id="noc:Noc_2101"/>
<dbReference type="eggNOG" id="COG0502">
    <property type="taxonomic scope" value="Bacteria"/>
</dbReference>
<dbReference type="HOGENOM" id="CLU_033172_1_2_6"/>
<dbReference type="InParanoid" id="Q3J9D5"/>
<dbReference type="UniPathway" id="UPA00078">
    <property type="reaction ID" value="UER00162"/>
</dbReference>
<dbReference type="Proteomes" id="UP000006838">
    <property type="component" value="Chromosome"/>
</dbReference>
<dbReference type="GO" id="GO:0051537">
    <property type="term" value="F:2 iron, 2 sulfur cluster binding"/>
    <property type="evidence" value="ECO:0007669"/>
    <property type="project" value="UniProtKB-KW"/>
</dbReference>
<dbReference type="GO" id="GO:0051539">
    <property type="term" value="F:4 iron, 4 sulfur cluster binding"/>
    <property type="evidence" value="ECO:0007669"/>
    <property type="project" value="UniProtKB-KW"/>
</dbReference>
<dbReference type="GO" id="GO:0004076">
    <property type="term" value="F:biotin synthase activity"/>
    <property type="evidence" value="ECO:0007669"/>
    <property type="project" value="UniProtKB-UniRule"/>
</dbReference>
<dbReference type="GO" id="GO:0005506">
    <property type="term" value="F:iron ion binding"/>
    <property type="evidence" value="ECO:0007669"/>
    <property type="project" value="UniProtKB-UniRule"/>
</dbReference>
<dbReference type="GO" id="GO:0009102">
    <property type="term" value="P:biotin biosynthetic process"/>
    <property type="evidence" value="ECO:0007669"/>
    <property type="project" value="UniProtKB-UniRule"/>
</dbReference>
<dbReference type="CDD" id="cd01335">
    <property type="entry name" value="Radical_SAM"/>
    <property type="match status" value="1"/>
</dbReference>
<dbReference type="FunFam" id="3.20.20.70:FF:000011">
    <property type="entry name" value="Biotin synthase"/>
    <property type="match status" value="1"/>
</dbReference>
<dbReference type="Gene3D" id="3.20.20.70">
    <property type="entry name" value="Aldolase class I"/>
    <property type="match status" value="1"/>
</dbReference>
<dbReference type="HAMAP" id="MF_01694">
    <property type="entry name" value="BioB"/>
    <property type="match status" value="1"/>
</dbReference>
<dbReference type="InterPro" id="IPR013785">
    <property type="entry name" value="Aldolase_TIM"/>
</dbReference>
<dbReference type="InterPro" id="IPR010722">
    <property type="entry name" value="BATS_dom"/>
</dbReference>
<dbReference type="InterPro" id="IPR002684">
    <property type="entry name" value="Biotin_synth/BioAB"/>
</dbReference>
<dbReference type="InterPro" id="IPR024177">
    <property type="entry name" value="Biotin_synthase"/>
</dbReference>
<dbReference type="InterPro" id="IPR006638">
    <property type="entry name" value="Elp3/MiaA/NifB-like_rSAM"/>
</dbReference>
<dbReference type="InterPro" id="IPR007197">
    <property type="entry name" value="rSAM"/>
</dbReference>
<dbReference type="NCBIfam" id="TIGR00433">
    <property type="entry name" value="bioB"/>
    <property type="match status" value="1"/>
</dbReference>
<dbReference type="PANTHER" id="PTHR22976">
    <property type="entry name" value="BIOTIN SYNTHASE"/>
    <property type="match status" value="1"/>
</dbReference>
<dbReference type="PANTHER" id="PTHR22976:SF2">
    <property type="entry name" value="BIOTIN SYNTHASE, MITOCHONDRIAL"/>
    <property type="match status" value="1"/>
</dbReference>
<dbReference type="Pfam" id="PF06968">
    <property type="entry name" value="BATS"/>
    <property type="match status" value="1"/>
</dbReference>
<dbReference type="Pfam" id="PF04055">
    <property type="entry name" value="Radical_SAM"/>
    <property type="match status" value="1"/>
</dbReference>
<dbReference type="PIRSF" id="PIRSF001619">
    <property type="entry name" value="Biotin_synth"/>
    <property type="match status" value="1"/>
</dbReference>
<dbReference type="SFLD" id="SFLDF00272">
    <property type="entry name" value="biotin_synthase"/>
    <property type="match status" value="1"/>
</dbReference>
<dbReference type="SFLD" id="SFLDG01278">
    <property type="entry name" value="biotin_synthase_like"/>
    <property type="match status" value="1"/>
</dbReference>
<dbReference type="SMART" id="SM00876">
    <property type="entry name" value="BATS"/>
    <property type="match status" value="1"/>
</dbReference>
<dbReference type="SMART" id="SM00729">
    <property type="entry name" value="Elp3"/>
    <property type="match status" value="1"/>
</dbReference>
<dbReference type="SUPFAM" id="SSF102114">
    <property type="entry name" value="Radical SAM enzymes"/>
    <property type="match status" value="1"/>
</dbReference>
<dbReference type="PROSITE" id="PS51918">
    <property type="entry name" value="RADICAL_SAM"/>
    <property type="match status" value="1"/>
</dbReference>
<sequence>MTYFPPAAEICDSPRHDWSIPEVLALFELPFVELIYRAQTVHRQHFNPNQVQMSTLLSIKTGGCPEDCAYCPQSVRYSTPVKAEPLLPLEEVLTAARNAKARGASRFCMGAAWRRLKERELEPVAKMITEVKALGLETCVTLGMLGPGQAERLKAAGLDYYNHNLDTSPEFYGEIITTRTYQDRLETLSQVREAGIHVCCGGIVGMGEERSDRAGLLANLANLPRHPESVPINRLVQVEGTPLAGAPELDPFEFVRTVACARILMPASFVRLSAGRETMSDELQALCFLAGANSIFYGEKLLTTPNPTTDHDQQLFERLGLELLFPQAQVAAPVPEADEVGSASG</sequence>
<comment type="function">
    <text evidence="1">Catalyzes the conversion of dethiobiotin (DTB) to biotin by the insertion of a sulfur atom into dethiobiotin via a radical-based mechanism.</text>
</comment>
<comment type="catalytic activity">
    <reaction evidence="1">
        <text>(4R,5S)-dethiobiotin + (sulfur carrier)-SH + 2 reduced [2Fe-2S]-[ferredoxin] + 2 S-adenosyl-L-methionine = (sulfur carrier)-H + biotin + 2 5'-deoxyadenosine + 2 L-methionine + 2 oxidized [2Fe-2S]-[ferredoxin]</text>
        <dbReference type="Rhea" id="RHEA:22060"/>
        <dbReference type="Rhea" id="RHEA-COMP:10000"/>
        <dbReference type="Rhea" id="RHEA-COMP:10001"/>
        <dbReference type="Rhea" id="RHEA-COMP:14737"/>
        <dbReference type="Rhea" id="RHEA-COMP:14739"/>
        <dbReference type="ChEBI" id="CHEBI:17319"/>
        <dbReference type="ChEBI" id="CHEBI:29917"/>
        <dbReference type="ChEBI" id="CHEBI:33737"/>
        <dbReference type="ChEBI" id="CHEBI:33738"/>
        <dbReference type="ChEBI" id="CHEBI:57586"/>
        <dbReference type="ChEBI" id="CHEBI:57844"/>
        <dbReference type="ChEBI" id="CHEBI:59789"/>
        <dbReference type="ChEBI" id="CHEBI:64428"/>
        <dbReference type="ChEBI" id="CHEBI:149473"/>
        <dbReference type="EC" id="2.8.1.6"/>
    </reaction>
</comment>
<comment type="cofactor">
    <cofactor evidence="1">
        <name>[4Fe-4S] cluster</name>
        <dbReference type="ChEBI" id="CHEBI:49883"/>
    </cofactor>
    <text evidence="1">Binds 1 [4Fe-4S] cluster. The cluster is coordinated with 3 cysteines and an exchangeable S-adenosyl-L-methionine.</text>
</comment>
<comment type="cofactor">
    <cofactor evidence="1">
        <name>[2Fe-2S] cluster</name>
        <dbReference type="ChEBI" id="CHEBI:190135"/>
    </cofactor>
    <text evidence="1">Binds 1 [2Fe-2S] cluster. The cluster is coordinated with 3 cysteines and 1 arginine.</text>
</comment>
<comment type="pathway">
    <text evidence="1">Cofactor biosynthesis; biotin biosynthesis; biotin from 7,8-diaminononanoate: step 2/2.</text>
</comment>
<comment type="subunit">
    <text evidence="1">Homodimer.</text>
</comment>
<comment type="similarity">
    <text evidence="1">Belongs to the radical SAM superfamily. Biotin synthase family.</text>
</comment>
<evidence type="ECO:0000255" key="1">
    <source>
        <dbReference type="HAMAP-Rule" id="MF_01694"/>
    </source>
</evidence>
<evidence type="ECO:0000255" key="2">
    <source>
        <dbReference type="PROSITE-ProRule" id="PRU01266"/>
    </source>
</evidence>
<proteinExistence type="inferred from homology"/>
<accession>Q3J9D5</accession>
<keyword id="KW-0001">2Fe-2S</keyword>
<keyword id="KW-0004">4Fe-4S</keyword>
<keyword id="KW-0093">Biotin biosynthesis</keyword>
<keyword id="KW-0408">Iron</keyword>
<keyword id="KW-0411">Iron-sulfur</keyword>
<keyword id="KW-0479">Metal-binding</keyword>
<keyword id="KW-1185">Reference proteome</keyword>
<keyword id="KW-0949">S-adenosyl-L-methionine</keyword>
<keyword id="KW-0808">Transferase</keyword>